<accession>Q03294</accession>
<name>PER_DROIM</name>
<feature type="chain" id="PRO_0000162593" description="Period circadian protein">
    <location>
        <begin position="1" status="less than"/>
        <end position="63" status="greater than"/>
    </location>
</feature>
<feature type="region of interest" description="Disordered" evidence="2">
    <location>
        <begin position="1"/>
        <end position="63"/>
    </location>
</feature>
<feature type="compositionally biased region" description="Low complexity" evidence="2">
    <location>
        <begin position="9"/>
        <end position="31"/>
    </location>
</feature>
<feature type="compositionally biased region" description="Low complexity" evidence="2">
    <location>
        <begin position="39"/>
        <end position="49"/>
    </location>
</feature>
<feature type="compositionally biased region" description="Polar residues" evidence="2">
    <location>
        <begin position="54"/>
        <end position="63"/>
    </location>
</feature>
<feature type="non-terminal residue">
    <location>
        <position position="1"/>
    </location>
</feature>
<feature type="non-terminal residue">
    <location>
        <position position="63"/>
    </location>
</feature>
<gene>
    <name type="primary">per</name>
</gene>
<proteinExistence type="inferred from homology"/>
<protein>
    <recommendedName>
        <fullName>Period circadian protein</fullName>
    </recommendedName>
</protein>
<comment type="function">
    <text evidence="1">Essential for biological clock functions. Determines the period length of circadian and ultradian rhythms; an increase in PER dosage leads to shortened circadian rhythms and a decrease leads to lengthened circadian rhythms. Essential for the circadian rhythmicity of locomotor activity, eclosion behavior, and for the rhythmic component of the male courtship song that originates in the thoracic nervous system. The biological cycle depends on the rhythmic formation and nuclear localization of the TIM-PER complex. Light induces the degradation of TIM, which promotes elimination of PER. Nuclear activity of the heterodimer coordinatively regulates PER and TIM transcription through a negative feedback loop. Behaves as a negative element in circadian transcriptional loop. Does not appear to bind DNA, suggesting indirect transcriptional inhibition (By similarity).</text>
</comment>
<comment type="subunit">
    <text evidence="1">Forms a heterodimer with timeless (TIM); the complex then translocates into the nucleus.</text>
</comment>
<comment type="subcellular location">
    <subcellularLocation>
        <location evidence="1">Nucleus</location>
    </subcellularLocation>
    <subcellularLocation>
        <location evidence="1">Cytoplasm</location>
        <location evidence="1">Perinuclear region</location>
    </subcellularLocation>
    <text evidence="1">Nuclear at specific periods of the day. First accumulates in the perinuclear region about one hour before translocation into the nucleus. Interaction with Tim is required for nuclear localization (By similarity).</text>
</comment>
<comment type="PTM">
    <text evidence="1">Phosphorylated with a circadian rhythmicity, probably by the double-time protein (dbt). Phosphorylation could be implicated in the stability of per monomer and in the formation of heterodimer per-tim (By similarity).</text>
</comment>
<reference key="1">
    <citation type="journal article" date="1993" name="Mol. Biol. Evol.">
        <title>Molecular evolution of a repetitive region within the per gene of Drosophila.</title>
        <authorList>
            <person name="Peixoto A.A."/>
            <person name="Campesan S."/>
            <person name="Costa R.H."/>
            <person name="Kyriacou C.P."/>
        </authorList>
    </citation>
    <scope>NUCLEOTIDE SEQUENCE [GENOMIC DNA]</scope>
</reference>
<evidence type="ECO:0000250" key="1"/>
<evidence type="ECO:0000256" key="2">
    <source>
        <dbReference type="SAM" id="MobiDB-lite"/>
    </source>
</evidence>
<keyword id="KW-0090">Biological rhythms</keyword>
<keyword id="KW-0963">Cytoplasm</keyword>
<keyword id="KW-0539">Nucleus</keyword>
<keyword id="KW-0597">Phosphoprotein</keyword>
<keyword id="KW-0677">Repeat</keyword>
<dbReference type="EMBL" id="L06337">
    <property type="protein sequence ID" value="AAA28760.1"/>
    <property type="molecule type" value="Genomic_DNA"/>
</dbReference>
<dbReference type="GO" id="GO:0005634">
    <property type="term" value="C:nucleus"/>
    <property type="evidence" value="ECO:0007669"/>
    <property type="project" value="UniProtKB-SubCell"/>
</dbReference>
<dbReference type="GO" id="GO:0048471">
    <property type="term" value="C:perinuclear region of cytoplasm"/>
    <property type="evidence" value="ECO:0007669"/>
    <property type="project" value="UniProtKB-SubCell"/>
</dbReference>
<dbReference type="GO" id="GO:0048511">
    <property type="term" value="P:rhythmic process"/>
    <property type="evidence" value="ECO:0007669"/>
    <property type="project" value="UniProtKB-KW"/>
</dbReference>
<sequence length="63" mass="5820">EGSGGSGSSGNFTTGSNVRMSSVTNTSNAGTGTSGGGNSAAASGASVNAPPVTVTLTESLLNK</sequence>
<organism>
    <name type="scientific">Drosophila immigrans</name>
    <name type="common">Fruit fly</name>
    <dbReference type="NCBI Taxonomy" id="7250"/>
    <lineage>
        <taxon>Eukaryota</taxon>
        <taxon>Metazoa</taxon>
        <taxon>Ecdysozoa</taxon>
        <taxon>Arthropoda</taxon>
        <taxon>Hexapoda</taxon>
        <taxon>Insecta</taxon>
        <taxon>Pterygota</taxon>
        <taxon>Neoptera</taxon>
        <taxon>Endopterygota</taxon>
        <taxon>Diptera</taxon>
        <taxon>Brachycera</taxon>
        <taxon>Muscomorpha</taxon>
        <taxon>Ephydroidea</taxon>
        <taxon>Drosophilidae</taxon>
        <taxon>Drosophila</taxon>
    </lineage>
</organism>